<reference key="1">
    <citation type="submission" date="2005-11" db="EMBL/GenBank/DDBJ databases">
        <authorList>
            <consortium name="NIH - Mammalian Gene Collection (MGC) project"/>
        </authorList>
    </citation>
    <scope>NUCLEOTIDE SEQUENCE [LARGE SCALE MRNA]</scope>
    <source>
        <strain>Crossbred X Angus</strain>
        <tissue>Liver</tissue>
    </source>
</reference>
<evidence type="ECO:0000250" key="1">
    <source>
        <dbReference type="UniProtKB" id="Q4KLG3"/>
    </source>
</evidence>
<evidence type="ECO:0000250" key="2">
    <source>
        <dbReference type="UniProtKB" id="Q8N300"/>
    </source>
</evidence>
<evidence type="ECO:0000250" key="3">
    <source>
        <dbReference type="UniProtKB" id="Q99LQ4"/>
    </source>
</evidence>
<evidence type="ECO:0000255" key="4"/>
<evidence type="ECO:0000256" key="5">
    <source>
        <dbReference type="SAM" id="MobiDB-lite"/>
    </source>
</evidence>
<evidence type="ECO:0000305" key="6"/>
<protein>
    <recommendedName>
        <fullName evidence="2">Small vasohibin-binding protein</fullName>
    </recommendedName>
    <alternativeName>
        <fullName evidence="2">Coiled coil domain-containing protein 23</fullName>
    </alternativeName>
</protein>
<name>SVBP_BOVIN</name>
<sequence>MDPPARKEKPKVKEPVSRIEKAKQKSAQQELKQRQRAEIYALNRVMTELEQQQFDEFCKQMQPPGE</sequence>
<comment type="function">
    <text evidence="1 2">Enhances the tyrosine carboxypeptidase activity of VASH1 and VASH2, thereby promoting the removal of the C-terminal tyrosine residue of alpha-tubulin. Also required to enhance the solubility and secretion of VASH1 and VASH2. Plays a role in axon and excitatory synapse formation (By similarity).</text>
</comment>
<comment type="subunit">
    <text evidence="2">Interacts with VASH1 and VASH2.</text>
</comment>
<comment type="subcellular location">
    <subcellularLocation>
        <location evidence="3">Cytoplasm</location>
    </subcellularLocation>
    <subcellularLocation>
        <location evidence="3">Secreted</location>
    </subcellularLocation>
    <subcellularLocation>
        <location evidence="2">Cytoplasm</location>
        <location evidence="2">Cytoskeleton</location>
    </subcellularLocation>
    <text evidence="3">Detected both intracellularly and extracellularly. Within cells, localizes mainly to the apical part of the cell.</text>
</comment>
<comment type="similarity">
    <text evidence="6">Belongs to the SVBP family.</text>
</comment>
<organism>
    <name type="scientific">Bos taurus</name>
    <name type="common">Bovine</name>
    <dbReference type="NCBI Taxonomy" id="9913"/>
    <lineage>
        <taxon>Eukaryota</taxon>
        <taxon>Metazoa</taxon>
        <taxon>Chordata</taxon>
        <taxon>Craniata</taxon>
        <taxon>Vertebrata</taxon>
        <taxon>Euteleostomi</taxon>
        <taxon>Mammalia</taxon>
        <taxon>Eutheria</taxon>
        <taxon>Laurasiatheria</taxon>
        <taxon>Artiodactyla</taxon>
        <taxon>Ruminantia</taxon>
        <taxon>Pecora</taxon>
        <taxon>Bovidae</taxon>
        <taxon>Bovinae</taxon>
        <taxon>Bos</taxon>
    </lineage>
</organism>
<feature type="chain" id="PRO_0000233662" description="Small vasohibin-binding protein">
    <location>
        <begin position="1"/>
        <end position="66"/>
    </location>
</feature>
<feature type="region of interest" description="Disordered" evidence="5">
    <location>
        <begin position="1"/>
        <end position="32"/>
    </location>
</feature>
<feature type="coiled-coil region" evidence="4">
    <location>
        <begin position="5"/>
        <end position="52"/>
    </location>
</feature>
<feature type="compositionally biased region" description="Basic and acidic residues" evidence="5">
    <location>
        <begin position="1"/>
        <end position="23"/>
    </location>
</feature>
<keyword id="KW-0175">Coiled coil</keyword>
<keyword id="KW-0963">Cytoplasm</keyword>
<keyword id="KW-0206">Cytoskeleton</keyword>
<keyword id="KW-1185">Reference proteome</keyword>
<keyword id="KW-0964">Secreted</keyword>
<dbReference type="EMBL" id="BC109552">
    <property type="protein sequence ID" value="AAI09553.1"/>
    <property type="molecule type" value="mRNA"/>
</dbReference>
<dbReference type="RefSeq" id="NP_001035665.1">
    <property type="nucleotide sequence ID" value="NM_001040575.1"/>
</dbReference>
<dbReference type="RefSeq" id="XP_005204903.1">
    <property type="nucleotide sequence ID" value="XM_005204846.3"/>
</dbReference>
<dbReference type="RefSeq" id="XP_005204904.1">
    <property type="nucleotide sequence ID" value="XM_005204847.3"/>
</dbReference>
<dbReference type="RefSeq" id="XP_005204905.1">
    <property type="nucleotide sequence ID" value="XM_005204848.2"/>
</dbReference>
<dbReference type="RefSeq" id="XP_005204906.1">
    <property type="nucleotide sequence ID" value="XM_005204849.5"/>
</dbReference>
<dbReference type="RefSeq" id="XP_005204907.1">
    <property type="nucleotide sequence ID" value="XM_005204850.3"/>
</dbReference>
<dbReference type="RefSeq" id="XP_059740827.1">
    <property type="nucleotide sequence ID" value="XM_059884844.1"/>
</dbReference>
<dbReference type="RefSeq" id="XP_059740828.1">
    <property type="nucleotide sequence ID" value="XM_059884845.1"/>
</dbReference>
<dbReference type="RefSeq" id="XP_059740829.1">
    <property type="nucleotide sequence ID" value="XM_059884846.1"/>
</dbReference>
<dbReference type="SMR" id="Q32LJ0"/>
<dbReference type="FunCoup" id="Q32LJ0">
    <property type="interactions" value="712"/>
</dbReference>
<dbReference type="STRING" id="9913.ENSBTAP00000040566"/>
<dbReference type="PaxDb" id="9913-ENSBTAP00000040566"/>
<dbReference type="Ensembl" id="ENSBTAT00000042962.3">
    <property type="protein sequence ID" value="ENSBTAP00000040566.2"/>
    <property type="gene ID" value="ENSBTAG00000017388.6"/>
</dbReference>
<dbReference type="GeneID" id="614073"/>
<dbReference type="KEGG" id="bta:614073"/>
<dbReference type="CTD" id="374969"/>
<dbReference type="VEuPathDB" id="HostDB:ENSBTAG00000017388"/>
<dbReference type="VGNC" id="VGNC:35497">
    <property type="gene designation" value="SVBP"/>
</dbReference>
<dbReference type="eggNOG" id="ENOG502S99I">
    <property type="taxonomic scope" value="Eukaryota"/>
</dbReference>
<dbReference type="GeneTree" id="ENSGT00390000006113"/>
<dbReference type="HOGENOM" id="CLU_2830589_0_0_1"/>
<dbReference type="InParanoid" id="Q32LJ0"/>
<dbReference type="OMA" id="AMDPPAR"/>
<dbReference type="OrthoDB" id="10035051at2759"/>
<dbReference type="TreeFam" id="TF344015"/>
<dbReference type="Proteomes" id="UP000009136">
    <property type="component" value="Chromosome 3"/>
</dbReference>
<dbReference type="Bgee" id="ENSBTAG00000017388">
    <property type="expression patterns" value="Expressed in semen and 104 other cell types or tissues"/>
</dbReference>
<dbReference type="GO" id="GO:0045177">
    <property type="term" value="C:apical part of cell"/>
    <property type="evidence" value="ECO:0000318"/>
    <property type="project" value="GO_Central"/>
</dbReference>
<dbReference type="GO" id="GO:0005737">
    <property type="term" value="C:cytoplasm"/>
    <property type="evidence" value="ECO:0007669"/>
    <property type="project" value="UniProtKB-SubCell"/>
</dbReference>
<dbReference type="GO" id="GO:0005856">
    <property type="term" value="C:cytoskeleton"/>
    <property type="evidence" value="ECO:0007669"/>
    <property type="project" value="UniProtKB-SubCell"/>
</dbReference>
<dbReference type="GO" id="GO:0005576">
    <property type="term" value="C:extracellular region"/>
    <property type="evidence" value="ECO:0007669"/>
    <property type="project" value="UniProtKB-SubCell"/>
</dbReference>
<dbReference type="GO" id="GO:0008017">
    <property type="term" value="F:microtubule binding"/>
    <property type="evidence" value="ECO:0000250"/>
    <property type="project" value="UniProtKB"/>
</dbReference>
<dbReference type="GO" id="GO:0016504">
    <property type="term" value="F:peptidase activator activity"/>
    <property type="evidence" value="ECO:0007669"/>
    <property type="project" value="Ensembl"/>
</dbReference>
<dbReference type="GO" id="GO:0061564">
    <property type="term" value="P:axon development"/>
    <property type="evidence" value="ECO:0000250"/>
    <property type="project" value="UniProtKB"/>
</dbReference>
<dbReference type="GO" id="GO:0010596">
    <property type="term" value="P:negative regulation of endothelial cell migration"/>
    <property type="evidence" value="ECO:0007669"/>
    <property type="project" value="Ensembl"/>
</dbReference>
<dbReference type="GO" id="GO:0031397">
    <property type="term" value="P:negative regulation of protein ubiquitination"/>
    <property type="evidence" value="ECO:0000318"/>
    <property type="project" value="GO_Central"/>
</dbReference>
<dbReference type="GO" id="GO:0009306">
    <property type="term" value="P:protein secretion"/>
    <property type="evidence" value="ECO:0000318"/>
    <property type="project" value="GO_Central"/>
</dbReference>
<dbReference type="GO" id="GO:0006508">
    <property type="term" value="P:proteolysis"/>
    <property type="evidence" value="ECO:0000250"/>
    <property type="project" value="UniProtKB"/>
</dbReference>
<dbReference type="GO" id="GO:1905048">
    <property type="term" value="P:regulation of metallopeptidase activity"/>
    <property type="evidence" value="ECO:0000250"/>
    <property type="project" value="UniProtKB"/>
</dbReference>
<dbReference type="InterPro" id="IPR031378">
    <property type="entry name" value="SVBP"/>
</dbReference>
<dbReference type="PANTHER" id="PTHR34762">
    <property type="entry name" value="SMALL VASOHIBIN-BINDING PROTEIN"/>
    <property type="match status" value="1"/>
</dbReference>
<dbReference type="PANTHER" id="PTHR34762:SF1">
    <property type="entry name" value="SMALL VASOHIBIN-BINDING PROTEIN"/>
    <property type="match status" value="1"/>
</dbReference>
<dbReference type="Pfam" id="PF15674">
    <property type="entry name" value="CCDC23"/>
    <property type="match status" value="1"/>
</dbReference>
<proteinExistence type="inferred from homology"/>
<gene>
    <name evidence="2" type="primary">SVBP</name>
    <name evidence="2" type="synonym">CCDC23</name>
</gene>
<accession>Q32LJ0</accession>